<feature type="chain" id="PRO_1000017389" description="Probable 4-amino-4-deoxy-L-arabinose-phosphoundecaprenol flippase subunit ArnF">
    <location>
        <begin position="1"/>
        <end position="128"/>
    </location>
</feature>
<feature type="topological domain" description="Cytoplasmic" evidence="1">
    <location>
        <begin position="1"/>
        <end position="10"/>
    </location>
</feature>
<feature type="transmembrane region" description="Helical" evidence="1">
    <location>
        <begin position="11"/>
        <end position="31"/>
    </location>
</feature>
<feature type="topological domain" description="Periplasmic" evidence="1">
    <location>
        <begin position="32"/>
        <end position="47"/>
    </location>
</feature>
<feature type="transmembrane region" description="Helical" evidence="1">
    <location>
        <begin position="48"/>
        <end position="68"/>
    </location>
</feature>
<feature type="topological domain" description="Cytoplasmic" evidence="1">
    <location>
        <begin position="69"/>
        <end position="77"/>
    </location>
</feature>
<feature type="transmembrane region" description="Helical" evidence="1">
    <location>
        <begin position="78"/>
        <end position="98"/>
    </location>
</feature>
<feature type="topological domain" description="Periplasmic" evidence="1">
    <location>
        <begin position="99"/>
        <end position="101"/>
    </location>
</feature>
<feature type="transmembrane region" description="Helical" evidence="1">
    <location>
        <begin position="102"/>
        <end position="122"/>
    </location>
</feature>
<feature type="topological domain" description="Cytoplasmic" evidence="1">
    <location>
        <begin position="123"/>
        <end position="128"/>
    </location>
</feature>
<protein>
    <recommendedName>
        <fullName evidence="1">Probable 4-amino-4-deoxy-L-arabinose-phosphoundecaprenol flippase subunit ArnF</fullName>
        <shortName evidence="1">L-Ara4N-phosphoundecaprenol flippase subunit ArnF</shortName>
    </recommendedName>
    <alternativeName>
        <fullName evidence="1">Undecaprenyl phosphate-aminoarabinose flippase subunit ArnF</fullName>
    </alternativeName>
</protein>
<sequence>MKGYLWGGASVVLVTVAQLVLKWGMMNIPLLSLADINVQFLTMYFVQLASVMCGLMGYALSMLCWFFALRYLPLNRAYPLLSLSYALVYLGAVLLPWFNEPATLLKTLGAGFILLGIWLINIKPIKAS</sequence>
<comment type="function">
    <text evidence="1">Translocates 4-amino-4-deoxy-L-arabinose-phosphoundecaprenol (alpha-L-Ara4N-phosphoundecaprenol) from the cytoplasmic to the periplasmic side of the inner membrane.</text>
</comment>
<comment type="pathway">
    <text evidence="1">Bacterial outer membrane biogenesis; lipopolysaccharide biosynthesis.</text>
</comment>
<comment type="subunit">
    <text evidence="1">Heterodimer of ArnE and ArnF.</text>
</comment>
<comment type="subcellular location">
    <subcellularLocation>
        <location evidence="1">Cell inner membrane</location>
        <topology evidence="1">Multi-pass membrane protein</topology>
    </subcellularLocation>
</comment>
<comment type="similarity">
    <text evidence="1">Belongs to the ArnF family.</text>
</comment>
<accession>Q1C746</accession>
<keyword id="KW-0997">Cell inner membrane</keyword>
<keyword id="KW-1003">Cell membrane</keyword>
<keyword id="KW-0441">Lipid A biosynthesis</keyword>
<keyword id="KW-0444">Lipid biosynthesis</keyword>
<keyword id="KW-0443">Lipid metabolism</keyword>
<keyword id="KW-0448">Lipopolysaccharide biosynthesis</keyword>
<keyword id="KW-0472">Membrane</keyword>
<keyword id="KW-0812">Transmembrane</keyword>
<keyword id="KW-1133">Transmembrane helix</keyword>
<keyword id="KW-0813">Transport</keyword>
<dbReference type="EMBL" id="CP000308">
    <property type="protein sequence ID" value="ABG13726.1"/>
    <property type="molecule type" value="Genomic_DNA"/>
</dbReference>
<dbReference type="RefSeq" id="WP_002211819.1">
    <property type="nucleotide sequence ID" value="NZ_CP009906.1"/>
</dbReference>
<dbReference type="GeneID" id="57976261"/>
<dbReference type="KEGG" id="ypa:YPA_1760"/>
<dbReference type="UniPathway" id="UPA00030"/>
<dbReference type="Proteomes" id="UP000001971">
    <property type="component" value="Chromosome"/>
</dbReference>
<dbReference type="GO" id="GO:0005886">
    <property type="term" value="C:plasma membrane"/>
    <property type="evidence" value="ECO:0007669"/>
    <property type="project" value="UniProtKB-SubCell"/>
</dbReference>
<dbReference type="GO" id="GO:1901505">
    <property type="term" value="F:carbohydrate derivative transmembrane transporter activity"/>
    <property type="evidence" value="ECO:0007669"/>
    <property type="project" value="InterPro"/>
</dbReference>
<dbReference type="GO" id="GO:0009245">
    <property type="term" value="P:lipid A biosynthetic process"/>
    <property type="evidence" value="ECO:0007669"/>
    <property type="project" value="UniProtKB-UniRule"/>
</dbReference>
<dbReference type="GO" id="GO:0009103">
    <property type="term" value="P:lipopolysaccharide biosynthetic process"/>
    <property type="evidence" value="ECO:0007669"/>
    <property type="project" value="UniProtKB-UniRule"/>
</dbReference>
<dbReference type="Gene3D" id="1.10.3730.20">
    <property type="match status" value="1"/>
</dbReference>
<dbReference type="HAMAP" id="MF_00538">
    <property type="entry name" value="Flippase_ArnF"/>
    <property type="match status" value="1"/>
</dbReference>
<dbReference type="InterPro" id="IPR022832">
    <property type="entry name" value="Flippase_ArnF"/>
</dbReference>
<dbReference type="InterPro" id="IPR000390">
    <property type="entry name" value="Small_drug/metabolite_transptr"/>
</dbReference>
<dbReference type="NCBIfam" id="NF002816">
    <property type="entry name" value="PRK02971.1-2"/>
    <property type="match status" value="1"/>
</dbReference>
<dbReference type="PANTHER" id="PTHR30561:SF9">
    <property type="entry name" value="4-AMINO-4-DEOXY-L-ARABINOSE-PHOSPHOUNDECAPRENOL FLIPPASE SUBUNIT ARNF-RELATED"/>
    <property type="match status" value="1"/>
</dbReference>
<dbReference type="PANTHER" id="PTHR30561">
    <property type="entry name" value="SMR FAMILY PROTON-DEPENDENT DRUG EFFLUX TRANSPORTER SUGE"/>
    <property type="match status" value="1"/>
</dbReference>
<dbReference type="SUPFAM" id="SSF103481">
    <property type="entry name" value="Multidrug resistance efflux transporter EmrE"/>
    <property type="match status" value="1"/>
</dbReference>
<name>ARNF_YERPA</name>
<reference key="1">
    <citation type="journal article" date="2006" name="J. Bacteriol.">
        <title>Complete genome sequence of Yersinia pestis strains Antiqua and Nepal516: evidence of gene reduction in an emerging pathogen.</title>
        <authorList>
            <person name="Chain P.S.G."/>
            <person name="Hu P."/>
            <person name="Malfatti S.A."/>
            <person name="Radnedge L."/>
            <person name="Larimer F."/>
            <person name="Vergez L.M."/>
            <person name="Worsham P."/>
            <person name="Chu M.C."/>
            <person name="Andersen G.L."/>
        </authorList>
    </citation>
    <scope>NUCLEOTIDE SEQUENCE [LARGE SCALE GENOMIC DNA]</scope>
    <source>
        <strain>Antiqua</strain>
    </source>
</reference>
<organism>
    <name type="scientific">Yersinia pestis bv. Antiqua (strain Antiqua)</name>
    <dbReference type="NCBI Taxonomy" id="360102"/>
    <lineage>
        <taxon>Bacteria</taxon>
        <taxon>Pseudomonadati</taxon>
        <taxon>Pseudomonadota</taxon>
        <taxon>Gammaproteobacteria</taxon>
        <taxon>Enterobacterales</taxon>
        <taxon>Yersiniaceae</taxon>
        <taxon>Yersinia</taxon>
    </lineage>
</organism>
<proteinExistence type="inferred from homology"/>
<evidence type="ECO:0000255" key="1">
    <source>
        <dbReference type="HAMAP-Rule" id="MF_00538"/>
    </source>
</evidence>
<gene>
    <name evidence="1" type="primary">arnF</name>
    <name type="ordered locus">YPA_1760</name>
</gene>